<comment type="function">
    <text>Tubulin is the major constituent of microtubules, a cylinder consisting of laterally associated linear protofilaments composed of alpha- and beta-tubulin heterodimers. Microtubules grow by the addition of GTP-tubulin dimers to the microtubule end, where a stabilizing cap forms. Below the cap, tubulin dimers are in GDP-bound state, owing to GTPase activity of alpha-tubulin.</text>
</comment>
<comment type="cofactor">
    <cofactor evidence="1">
        <name>Mg(2+)</name>
        <dbReference type="ChEBI" id="CHEBI:18420"/>
    </cofactor>
</comment>
<comment type="subunit">
    <text>Dimer of alpha and beta chains. A typical microtubule is a hollow water-filled tube with an outer diameter of 25 nm and an inner diameter of 15 nM. Alpha-beta heterodimers associate head-to-tail to form protofilaments running lengthwise along the microtubule wall with the beta-tubulin subunit facing the microtubule plus end conferring a structural polarity. Microtubules usually have 13 protofilaments but different protofilament numbers can be found in some organisms and specialized cells.</text>
</comment>
<comment type="subcellular location">
    <subcellularLocation>
        <location>Cytoplasm</location>
        <location>Cytoskeleton</location>
    </subcellularLocation>
</comment>
<comment type="miscellaneous">
    <text>E.nidulans has two beta-tubulin genes: benA and tubC; benA is expressed during vegetative growth.</text>
</comment>
<comment type="miscellaneous">
    <text>Rhizoxin, an antibiotic that exhibits potent anti-mitotic activity against most eukaryotic cells except for yeasts, binds to beta tubulin.</text>
</comment>
<comment type="similarity">
    <text evidence="3">Belongs to the tubulin family.</text>
</comment>
<reference key="1">
    <citation type="journal article" date="1987" name="Gene">
        <title>Aspergillus nidulans beta-tubulin genes are unusually divergent.</title>
        <authorList>
            <person name="May G.S."/>
            <person name="Tsang M.L.-S."/>
            <person name="Smith H."/>
            <person name="Fidel S."/>
            <person name="Morris N.R."/>
        </authorList>
    </citation>
    <scope>NUCLEOTIDE SEQUENCE [GENOMIC DNA]</scope>
</reference>
<reference key="2">
    <citation type="submission" date="1987-12" db="EMBL/GenBank/DDBJ databases">
        <authorList>
            <person name="May G.S."/>
        </authorList>
    </citation>
    <scope>SEQUENCE REVISION</scope>
</reference>
<reference key="3">
    <citation type="journal article" date="1990" name="Mol. Gen. Genet.">
        <title>Molecular basis for determining the sensitivity of eucaryotes to the antimitotic drug rhizoxin.</title>
        <authorList>
            <person name="Takahashi M."/>
            <person name="Matsumoto S."/>
            <person name="Iwasaki S."/>
            <person name="Yahara I."/>
        </authorList>
    </citation>
    <scope>NUCLEOTIDE SEQUENCE [GENOMIC DNA]</scope>
    <scope>ANTIBIOTIC RESISTANCE TO RHIZOXIN</scope>
</reference>
<reference key="4">
    <citation type="journal article" date="2005" name="Nature">
        <title>Sequencing of Aspergillus nidulans and comparative analysis with A. fumigatus and A. oryzae.</title>
        <authorList>
            <person name="Galagan J.E."/>
            <person name="Calvo S.E."/>
            <person name="Cuomo C."/>
            <person name="Ma L.-J."/>
            <person name="Wortman J.R."/>
            <person name="Batzoglou S."/>
            <person name="Lee S.-I."/>
            <person name="Bastuerkmen M."/>
            <person name="Spevak C.C."/>
            <person name="Clutterbuck J."/>
            <person name="Kapitonov V."/>
            <person name="Jurka J."/>
            <person name="Scazzocchio C."/>
            <person name="Farman M.L."/>
            <person name="Butler J."/>
            <person name="Purcell S."/>
            <person name="Harris S."/>
            <person name="Braus G.H."/>
            <person name="Draht O."/>
            <person name="Busch S."/>
            <person name="D'Enfert C."/>
            <person name="Bouchier C."/>
            <person name="Goldman G.H."/>
            <person name="Bell-Pedersen D."/>
            <person name="Griffiths-Jones S."/>
            <person name="Doonan J.H."/>
            <person name="Yu J."/>
            <person name="Vienken K."/>
            <person name="Pain A."/>
            <person name="Freitag M."/>
            <person name="Selker E.U."/>
            <person name="Archer D.B."/>
            <person name="Penalva M.A."/>
            <person name="Oakley B.R."/>
            <person name="Momany M."/>
            <person name="Tanaka T."/>
            <person name="Kumagai T."/>
            <person name="Asai K."/>
            <person name="Machida M."/>
            <person name="Nierman W.C."/>
            <person name="Denning D.W."/>
            <person name="Caddick M.X."/>
            <person name="Hynes M."/>
            <person name="Paoletti M."/>
            <person name="Fischer R."/>
            <person name="Miller B.L."/>
            <person name="Dyer P.S."/>
            <person name="Sachs M.S."/>
            <person name="Osmani S.A."/>
            <person name="Birren B.W."/>
        </authorList>
    </citation>
    <scope>NUCLEOTIDE SEQUENCE [LARGE SCALE GENOMIC DNA]</scope>
    <source>
        <strain>FGSC A4 / ATCC 38163 / CBS 112.46 / NRRL 194 / M139</strain>
    </source>
</reference>
<reference key="5">
    <citation type="journal article" date="2009" name="Fungal Genet. Biol.">
        <title>The 2008 update of the Aspergillus nidulans genome annotation: a community effort.</title>
        <authorList>
            <person name="Wortman J.R."/>
            <person name="Gilsenan J.M."/>
            <person name="Joardar V."/>
            <person name="Deegan J."/>
            <person name="Clutterbuck J."/>
            <person name="Andersen M.R."/>
            <person name="Archer D."/>
            <person name="Bencina M."/>
            <person name="Braus G."/>
            <person name="Coutinho P."/>
            <person name="von Dohren H."/>
            <person name="Doonan J."/>
            <person name="Driessen A.J."/>
            <person name="Durek P."/>
            <person name="Espeso E."/>
            <person name="Fekete E."/>
            <person name="Flipphi M."/>
            <person name="Estrada C.G."/>
            <person name="Geysens S."/>
            <person name="Goldman G."/>
            <person name="de Groot P.W."/>
            <person name="Hansen K."/>
            <person name="Harris S.D."/>
            <person name="Heinekamp T."/>
            <person name="Helmstaedt K."/>
            <person name="Henrissat B."/>
            <person name="Hofmann G."/>
            <person name="Homan T."/>
            <person name="Horio T."/>
            <person name="Horiuchi H."/>
            <person name="James S."/>
            <person name="Jones M."/>
            <person name="Karaffa L."/>
            <person name="Karanyi Z."/>
            <person name="Kato M."/>
            <person name="Keller N."/>
            <person name="Kelly D.E."/>
            <person name="Kiel J.A."/>
            <person name="Kim J.M."/>
            <person name="van der Klei I.J."/>
            <person name="Klis F.M."/>
            <person name="Kovalchuk A."/>
            <person name="Krasevec N."/>
            <person name="Kubicek C.P."/>
            <person name="Liu B."/>
            <person name="Maccabe A."/>
            <person name="Meyer V."/>
            <person name="Mirabito P."/>
            <person name="Miskei M."/>
            <person name="Mos M."/>
            <person name="Mullins J."/>
            <person name="Nelson D.R."/>
            <person name="Nielsen J."/>
            <person name="Oakley B.R."/>
            <person name="Osmani S.A."/>
            <person name="Pakula T."/>
            <person name="Paszewski A."/>
            <person name="Paulsen I."/>
            <person name="Pilsyk S."/>
            <person name="Pocsi I."/>
            <person name="Punt P.J."/>
            <person name="Ram A.F."/>
            <person name="Ren Q."/>
            <person name="Robellet X."/>
            <person name="Robson G."/>
            <person name="Seiboth B."/>
            <person name="van Solingen P."/>
            <person name="Specht T."/>
            <person name="Sun J."/>
            <person name="Taheri-Talesh N."/>
            <person name="Takeshita N."/>
            <person name="Ussery D."/>
            <person name="vanKuyk P.A."/>
            <person name="Visser H."/>
            <person name="van de Vondervoort P.J."/>
            <person name="de Vries R.P."/>
            <person name="Walton J."/>
            <person name="Xiang X."/>
            <person name="Xiong Y."/>
            <person name="Zeng A.P."/>
            <person name="Brandt B.W."/>
            <person name="Cornell M.J."/>
            <person name="van den Hondel C.A."/>
            <person name="Visser J."/>
            <person name="Oliver S.G."/>
            <person name="Turner G."/>
        </authorList>
    </citation>
    <scope>GENOME REANNOTATION</scope>
    <source>
        <strain>FGSC A4 / ATCC 38163 / CBS 112.46 / NRRL 194 / M139</strain>
    </source>
</reference>
<evidence type="ECO:0000250" key="1">
    <source>
        <dbReference type="UniProtKB" id="P68363"/>
    </source>
</evidence>
<evidence type="ECO:0000250" key="2">
    <source>
        <dbReference type="UniProtKB" id="Q13509"/>
    </source>
</evidence>
<evidence type="ECO:0000305" key="3"/>
<name>TBB1_EMENI</name>
<proteinExistence type="inferred from homology"/>
<dbReference type="EMBL" id="M17519">
    <property type="protein sequence ID" value="AAA33328.1"/>
    <property type="molecule type" value="Genomic_DNA"/>
</dbReference>
<dbReference type="EMBL" id="AACD01000016">
    <property type="protein sequence ID" value="EAA66300.1"/>
    <property type="molecule type" value="Genomic_DNA"/>
</dbReference>
<dbReference type="EMBL" id="BN001308">
    <property type="protein sequence ID" value="CBF87981.1"/>
    <property type="molecule type" value="Genomic_DNA"/>
</dbReference>
<dbReference type="PIR" id="JQ0171">
    <property type="entry name" value="JQ0171"/>
</dbReference>
<dbReference type="RefSeq" id="XP_658786.1">
    <property type="nucleotide sequence ID" value="XM_653694.1"/>
</dbReference>
<dbReference type="SMR" id="P10653"/>
<dbReference type="FunCoup" id="P10653">
    <property type="interactions" value="1249"/>
</dbReference>
<dbReference type="STRING" id="227321.P10653"/>
<dbReference type="EnsemblFungi" id="CBF87981">
    <property type="protein sequence ID" value="CBF87981"/>
    <property type="gene ID" value="ANIA_01182"/>
</dbReference>
<dbReference type="KEGG" id="ani:ANIA_01182"/>
<dbReference type="VEuPathDB" id="FungiDB:AN1182"/>
<dbReference type="eggNOG" id="KOG1375">
    <property type="taxonomic scope" value="Eukaryota"/>
</dbReference>
<dbReference type="HOGENOM" id="CLU_015718_1_1_1"/>
<dbReference type="InParanoid" id="P10653"/>
<dbReference type="OMA" id="WVPRSVN"/>
<dbReference type="OrthoDB" id="1662883at2759"/>
<dbReference type="Proteomes" id="UP000000560">
    <property type="component" value="Chromosome VIII"/>
</dbReference>
<dbReference type="GO" id="GO:0005737">
    <property type="term" value="C:cytoplasm"/>
    <property type="evidence" value="ECO:0000318"/>
    <property type="project" value="GO_Central"/>
</dbReference>
<dbReference type="GO" id="GO:0005881">
    <property type="term" value="C:cytoplasmic microtubule"/>
    <property type="evidence" value="ECO:0000315"/>
    <property type="project" value="AspGD"/>
</dbReference>
<dbReference type="GO" id="GO:0005874">
    <property type="term" value="C:microtubule"/>
    <property type="evidence" value="ECO:0000318"/>
    <property type="project" value="GO_Central"/>
</dbReference>
<dbReference type="GO" id="GO:0005876">
    <property type="term" value="C:spindle microtubule"/>
    <property type="evidence" value="ECO:0000314"/>
    <property type="project" value="AspGD"/>
</dbReference>
<dbReference type="GO" id="GO:0045298">
    <property type="term" value="C:tubulin complex"/>
    <property type="evidence" value="ECO:0000266"/>
    <property type="project" value="AspGD"/>
</dbReference>
<dbReference type="GO" id="GO:0005525">
    <property type="term" value="F:GTP binding"/>
    <property type="evidence" value="ECO:0000318"/>
    <property type="project" value="GO_Central"/>
</dbReference>
<dbReference type="GO" id="GO:0003924">
    <property type="term" value="F:GTPase activity"/>
    <property type="evidence" value="ECO:0007669"/>
    <property type="project" value="InterPro"/>
</dbReference>
<dbReference type="GO" id="GO:0046872">
    <property type="term" value="F:metal ion binding"/>
    <property type="evidence" value="ECO:0007669"/>
    <property type="project" value="UniProtKB-KW"/>
</dbReference>
<dbReference type="GO" id="GO:0005200">
    <property type="term" value="F:structural constituent of cytoskeleton"/>
    <property type="evidence" value="ECO:0000266"/>
    <property type="project" value="AspGD"/>
</dbReference>
<dbReference type="GO" id="GO:0000226">
    <property type="term" value="P:microtubule cytoskeleton organization"/>
    <property type="evidence" value="ECO:0000318"/>
    <property type="project" value="GO_Central"/>
</dbReference>
<dbReference type="GO" id="GO:0007019">
    <property type="term" value="P:microtubule depolymerization"/>
    <property type="evidence" value="ECO:0000315"/>
    <property type="project" value="AspGD"/>
</dbReference>
<dbReference type="GO" id="GO:0007017">
    <property type="term" value="P:microtubule-based process"/>
    <property type="evidence" value="ECO:0000266"/>
    <property type="project" value="AspGD"/>
</dbReference>
<dbReference type="GO" id="GO:0000278">
    <property type="term" value="P:mitotic cell cycle"/>
    <property type="evidence" value="ECO:0000318"/>
    <property type="project" value="GO_Central"/>
</dbReference>
<dbReference type="GO" id="GO:0000070">
    <property type="term" value="P:mitotic sister chromatid segregation"/>
    <property type="evidence" value="ECO:0000315"/>
    <property type="project" value="AspGD"/>
</dbReference>
<dbReference type="GO" id="GO:0051228">
    <property type="term" value="P:mitotic spindle disassembly"/>
    <property type="evidence" value="ECO:0000315"/>
    <property type="project" value="AspGD"/>
</dbReference>
<dbReference type="GO" id="GO:0030473">
    <property type="term" value="P:nuclear migration along microtubule"/>
    <property type="evidence" value="ECO:0000315"/>
    <property type="project" value="AspGD"/>
</dbReference>
<dbReference type="GO" id="GO:0046677">
    <property type="term" value="P:response to antibiotic"/>
    <property type="evidence" value="ECO:0007669"/>
    <property type="project" value="UniProtKB-KW"/>
</dbReference>
<dbReference type="CDD" id="cd02187">
    <property type="entry name" value="beta_tubulin"/>
    <property type="match status" value="1"/>
</dbReference>
<dbReference type="FunFam" id="1.10.287.600:FF:000003">
    <property type="entry name" value="Tubulin beta chain"/>
    <property type="match status" value="1"/>
</dbReference>
<dbReference type="FunFam" id="3.30.1330.20:FF:000002">
    <property type="entry name" value="Tubulin beta chain"/>
    <property type="match status" value="1"/>
</dbReference>
<dbReference type="FunFam" id="3.40.50.1440:FF:000009">
    <property type="entry name" value="Tubulin beta chain"/>
    <property type="match status" value="1"/>
</dbReference>
<dbReference type="Gene3D" id="1.10.287.600">
    <property type="entry name" value="Helix hairpin bin"/>
    <property type="match status" value="1"/>
</dbReference>
<dbReference type="Gene3D" id="3.30.1330.20">
    <property type="entry name" value="Tubulin/FtsZ, C-terminal domain"/>
    <property type="match status" value="1"/>
</dbReference>
<dbReference type="Gene3D" id="3.40.50.1440">
    <property type="entry name" value="Tubulin/FtsZ, GTPase domain"/>
    <property type="match status" value="1"/>
</dbReference>
<dbReference type="InterPro" id="IPR013838">
    <property type="entry name" value="Beta-tubulin_BS"/>
</dbReference>
<dbReference type="InterPro" id="IPR002453">
    <property type="entry name" value="Beta_tubulin"/>
</dbReference>
<dbReference type="InterPro" id="IPR008280">
    <property type="entry name" value="Tub_FtsZ_C"/>
</dbReference>
<dbReference type="InterPro" id="IPR000217">
    <property type="entry name" value="Tubulin"/>
</dbReference>
<dbReference type="InterPro" id="IPR037103">
    <property type="entry name" value="Tubulin/FtsZ-like_C"/>
</dbReference>
<dbReference type="InterPro" id="IPR018316">
    <property type="entry name" value="Tubulin/FtsZ_2-layer-sand-dom"/>
</dbReference>
<dbReference type="InterPro" id="IPR036525">
    <property type="entry name" value="Tubulin/FtsZ_GTPase_sf"/>
</dbReference>
<dbReference type="InterPro" id="IPR023123">
    <property type="entry name" value="Tubulin_C"/>
</dbReference>
<dbReference type="InterPro" id="IPR017975">
    <property type="entry name" value="Tubulin_CS"/>
</dbReference>
<dbReference type="InterPro" id="IPR003008">
    <property type="entry name" value="Tubulin_FtsZ_GTPase"/>
</dbReference>
<dbReference type="PANTHER" id="PTHR11588">
    <property type="entry name" value="TUBULIN"/>
    <property type="match status" value="1"/>
</dbReference>
<dbReference type="Pfam" id="PF00091">
    <property type="entry name" value="Tubulin"/>
    <property type="match status" value="1"/>
</dbReference>
<dbReference type="Pfam" id="PF03953">
    <property type="entry name" value="Tubulin_C"/>
    <property type="match status" value="1"/>
</dbReference>
<dbReference type="PRINTS" id="PR01163">
    <property type="entry name" value="BETATUBULIN"/>
</dbReference>
<dbReference type="PRINTS" id="PR01161">
    <property type="entry name" value="TUBULIN"/>
</dbReference>
<dbReference type="SMART" id="SM00864">
    <property type="entry name" value="Tubulin"/>
    <property type="match status" value="1"/>
</dbReference>
<dbReference type="SMART" id="SM00865">
    <property type="entry name" value="Tubulin_C"/>
    <property type="match status" value="1"/>
</dbReference>
<dbReference type="SUPFAM" id="SSF55307">
    <property type="entry name" value="Tubulin C-terminal domain-like"/>
    <property type="match status" value="1"/>
</dbReference>
<dbReference type="SUPFAM" id="SSF52490">
    <property type="entry name" value="Tubulin nucleotide-binding domain-like"/>
    <property type="match status" value="1"/>
</dbReference>
<dbReference type="PROSITE" id="PS00227">
    <property type="entry name" value="TUBULIN"/>
    <property type="match status" value="1"/>
</dbReference>
<dbReference type="PROSITE" id="PS00228">
    <property type="entry name" value="TUBULIN_B_AUTOREG"/>
    <property type="match status" value="1"/>
</dbReference>
<feature type="chain" id="PRO_0000048406" description="Tubulin beta-1 chain">
    <location>
        <begin position="1"/>
        <end position="447"/>
    </location>
</feature>
<feature type="binding site" evidence="2">
    <location>
        <position position="11"/>
    </location>
    <ligand>
        <name>GTP</name>
        <dbReference type="ChEBI" id="CHEBI:37565"/>
    </ligand>
</feature>
<feature type="binding site" evidence="1">
    <location>
        <position position="69"/>
    </location>
    <ligand>
        <name>GTP</name>
        <dbReference type="ChEBI" id="CHEBI:37565"/>
    </ligand>
</feature>
<feature type="binding site" evidence="1">
    <location>
        <position position="69"/>
    </location>
    <ligand>
        <name>Mg(2+)</name>
        <dbReference type="ChEBI" id="CHEBI:18420"/>
    </ligand>
</feature>
<feature type="binding site" evidence="2">
    <location>
        <position position="138"/>
    </location>
    <ligand>
        <name>GTP</name>
        <dbReference type="ChEBI" id="CHEBI:37565"/>
    </ligand>
</feature>
<feature type="binding site" evidence="2">
    <location>
        <position position="142"/>
    </location>
    <ligand>
        <name>GTP</name>
        <dbReference type="ChEBI" id="CHEBI:37565"/>
    </ligand>
</feature>
<feature type="binding site" evidence="2">
    <location>
        <position position="143"/>
    </location>
    <ligand>
        <name>GTP</name>
        <dbReference type="ChEBI" id="CHEBI:37565"/>
    </ligand>
</feature>
<feature type="binding site" evidence="2">
    <location>
        <position position="144"/>
    </location>
    <ligand>
        <name>GTP</name>
        <dbReference type="ChEBI" id="CHEBI:37565"/>
    </ligand>
</feature>
<feature type="binding site" evidence="2">
    <location>
        <position position="204"/>
    </location>
    <ligand>
        <name>GTP</name>
        <dbReference type="ChEBI" id="CHEBI:37565"/>
    </ligand>
</feature>
<feature type="binding site" evidence="2">
    <location>
        <position position="226"/>
    </location>
    <ligand>
        <name>GTP</name>
        <dbReference type="ChEBI" id="CHEBI:37565"/>
    </ligand>
</feature>
<feature type="sequence variant" description="Resistance to rhizoxin.">
    <original>N</original>
    <variation>I</variation>
    <location>
        <position position="100"/>
    </location>
</feature>
<feature type="sequence conflict" description="In Ref. 1 and 2." evidence="3" ref="1 2">
    <original>A</original>
    <variation>C</variation>
    <location>
        <position position="75"/>
    </location>
</feature>
<feature type="sequence conflict" description="In Ref. 1 and 2." evidence="3" ref="1 2">
    <original>L</original>
    <variation>W</variation>
    <location>
        <position position="253"/>
    </location>
</feature>
<feature type="sequence conflict" description="In Ref. 1 and 2." evidence="3" ref="1 2">
    <original>T</original>
    <variation>S</variation>
    <location>
        <position position="351"/>
    </location>
</feature>
<accession>P10653</accession>
<accession>C8VT11</accession>
<accession>Q5BE48</accession>
<sequence>MREIVHLQTGQCGNQIGAAFWQTISGEHGLDGSGVYNGTSDLQLERMNVYFNEASGNKYVPRAVLVDLEPGTMDAVRAGPFGELFRPDNFVFGQSGAGNNWAKGHYTEGAELVDNVVDVVRREAEGCDCLQGFQITHSLGGGTGAGMGTLLISKIREEFPDRMMATFSVVPSPKVSDTVVEPYNATLSVHQLVEHSDETFCIDNEALYDICMRTLKLSNPSYGDLNHLVSAVMSGVTTCLRFPGQLNSDLRKLAVNMVPFPRLHFFMVGFAPLTSRGAYSFRAVSVPELTQQMFDPKNMMAASDFRNGRYLTCSAIFRGKVSMKEVEDQMRNIQSKNQSYFVEWIPNNIQTALCSIPPRGLKMSSTFIGNSTSIQELFKRVGDQFTAMFRRKAFLHWYTGEGMDEMEFTEAESNMNDLVSEYQQYQDASISEGEEEYAEEEIMEGEE</sequence>
<protein>
    <recommendedName>
        <fullName>Tubulin beta-1 chain</fullName>
    </recommendedName>
    <alternativeName>
        <fullName>Beta-1-tubulin</fullName>
    </alternativeName>
</protein>
<gene>
    <name type="primary">benA</name>
    <name type="synonym">rhiA</name>
    <name type="ORF">AN1182</name>
</gene>
<organism>
    <name type="scientific">Emericella nidulans (strain FGSC A4 / ATCC 38163 / CBS 112.46 / NRRL 194 / M139)</name>
    <name type="common">Aspergillus nidulans</name>
    <dbReference type="NCBI Taxonomy" id="227321"/>
    <lineage>
        <taxon>Eukaryota</taxon>
        <taxon>Fungi</taxon>
        <taxon>Dikarya</taxon>
        <taxon>Ascomycota</taxon>
        <taxon>Pezizomycotina</taxon>
        <taxon>Eurotiomycetes</taxon>
        <taxon>Eurotiomycetidae</taxon>
        <taxon>Eurotiales</taxon>
        <taxon>Aspergillaceae</taxon>
        <taxon>Aspergillus</taxon>
        <taxon>Aspergillus subgen. Nidulantes</taxon>
    </lineage>
</organism>
<keyword id="KW-0046">Antibiotic resistance</keyword>
<keyword id="KW-0963">Cytoplasm</keyword>
<keyword id="KW-0206">Cytoskeleton</keyword>
<keyword id="KW-0342">GTP-binding</keyword>
<keyword id="KW-0460">Magnesium</keyword>
<keyword id="KW-0479">Metal-binding</keyword>
<keyword id="KW-0493">Microtubule</keyword>
<keyword id="KW-0547">Nucleotide-binding</keyword>
<keyword id="KW-1185">Reference proteome</keyword>